<evidence type="ECO:0000250" key="1"/>
<evidence type="ECO:0000255" key="2"/>
<evidence type="ECO:0000305" key="3"/>
<name>ESL1_MYCPN</name>
<keyword id="KW-0378">Hydrolase</keyword>
<keyword id="KW-1185">Reference proteome</keyword>
<keyword id="KW-0719">Serine esterase</keyword>
<reference key="1">
    <citation type="journal article" date="1996" name="Nucleic Acids Res.">
        <title>Complete sequence analysis of the genome of the bacterium Mycoplasma pneumoniae.</title>
        <authorList>
            <person name="Himmelreich R."/>
            <person name="Hilbert H."/>
            <person name="Plagens H."/>
            <person name="Pirkl E."/>
            <person name="Li B.-C."/>
            <person name="Herrmann R."/>
        </authorList>
    </citation>
    <scope>NUCLEOTIDE SEQUENCE [LARGE SCALE GENOMIC DNA]</scope>
    <source>
        <strain>ATCC 29342 / M129 / Subtype 1</strain>
    </source>
</reference>
<accession>P75333</accession>
<feature type="chain" id="PRO_0000207075" description="Putative esterase/lipase 1">
    <location>
        <begin position="1"/>
        <end position="269"/>
    </location>
</feature>
<feature type="active site" evidence="2">
    <location>
        <position position="27"/>
    </location>
</feature>
<feature type="active site" description="Charge relay system" evidence="1">
    <location>
        <position position="94"/>
    </location>
</feature>
<proteinExistence type="inferred from homology"/>
<organism>
    <name type="scientific">Mycoplasma pneumoniae (strain ATCC 29342 / M129 / Subtype 1)</name>
    <name type="common">Mycoplasmoides pneumoniae</name>
    <dbReference type="NCBI Taxonomy" id="272634"/>
    <lineage>
        <taxon>Bacteria</taxon>
        <taxon>Bacillati</taxon>
        <taxon>Mycoplasmatota</taxon>
        <taxon>Mycoplasmoidales</taxon>
        <taxon>Mycoplasmoidaceae</taxon>
        <taxon>Mycoplasmoides</taxon>
    </lineage>
</organism>
<protein>
    <recommendedName>
        <fullName>Putative esterase/lipase 1</fullName>
        <ecNumber>3.1.-.-</ecNumber>
    </recommendedName>
</protein>
<sequence length="269" mass="30921">MRLEIENGLEFVCDPFLNERGKIFFLHAFTGNITNKLSFRTHFKDYSFYGINFPGHGNSVIHNQSELDFNFWIKLVQQFFNKYQLKNVVLFGHSIGGGLAIALTQVLTKEQIKGIILEAPLNPGIRATPPSIISALVPDTNEDFEAVQRALIYNIEQRFGANFKDFCAKQKQKMIQKYAPLKVMLQPEQAEQRLQLIDAAFKRLSYPTLWIHGQEDGIVRYLPSKAYLESLHNPLIELVGLSNTAHTTFFEQPQQFLQLVEQFLNKLNK</sequence>
<dbReference type="EC" id="3.1.-.-"/>
<dbReference type="EMBL" id="U00089">
    <property type="protein sequence ID" value="AAB96044.1"/>
    <property type="status" value="ALT_INIT"/>
    <property type="molecule type" value="Genomic_DNA"/>
</dbReference>
<dbReference type="PIR" id="S73722">
    <property type="entry name" value="S73722"/>
</dbReference>
<dbReference type="RefSeq" id="NP_110133.1">
    <property type="nucleotide sequence ID" value="NC_000912.1"/>
</dbReference>
<dbReference type="RefSeq" id="WP_015344913.1">
    <property type="nucleotide sequence ID" value="NC_000912.1"/>
</dbReference>
<dbReference type="SMR" id="P75333"/>
<dbReference type="IntAct" id="P75333">
    <property type="interactions" value="1"/>
</dbReference>
<dbReference type="STRING" id="272634.MPN_445"/>
<dbReference type="ESTHER" id="mycpn-esl1">
    <property type="family name" value="AlphaBeta_hydrolase"/>
</dbReference>
<dbReference type="EnsemblBacteria" id="AAB96044">
    <property type="protein sequence ID" value="AAB96044"/>
    <property type="gene ID" value="MPN_445"/>
</dbReference>
<dbReference type="KEGG" id="mpn:MPN_445"/>
<dbReference type="PATRIC" id="fig|272634.6.peg.481"/>
<dbReference type="HOGENOM" id="CLU_020336_41_1_14"/>
<dbReference type="OrthoDB" id="403987at2"/>
<dbReference type="Proteomes" id="UP000000808">
    <property type="component" value="Chromosome"/>
</dbReference>
<dbReference type="GO" id="GO:0016020">
    <property type="term" value="C:membrane"/>
    <property type="evidence" value="ECO:0007669"/>
    <property type="project" value="TreeGrafter"/>
</dbReference>
<dbReference type="GO" id="GO:0052689">
    <property type="term" value="F:carboxylic ester hydrolase activity"/>
    <property type="evidence" value="ECO:0007669"/>
    <property type="project" value="UniProtKB-KW"/>
</dbReference>
<dbReference type="Gene3D" id="3.40.50.1820">
    <property type="entry name" value="alpha/beta hydrolase"/>
    <property type="match status" value="1"/>
</dbReference>
<dbReference type="InterPro" id="IPR029058">
    <property type="entry name" value="AB_hydrolase_fold"/>
</dbReference>
<dbReference type="InterPro" id="IPR050266">
    <property type="entry name" value="AB_hydrolase_sf"/>
</dbReference>
<dbReference type="InterPro" id="IPR022742">
    <property type="entry name" value="Hydrolase_4"/>
</dbReference>
<dbReference type="PANTHER" id="PTHR43798:SF33">
    <property type="entry name" value="HYDROLASE, PUTATIVE (AFU_ORTHOLOGUE AFUA_2G14860)-RELATED"/>
    <property type="match status" value="1"/>
</dbReference>
<dbReference type="PANTHER" id="PTHR43798">
    <property type="entry name" value="MONOACYLGLYCEROL LIPASE"/>
    <property type="match status" value="1"/>
</dbReference>
<dbReference type="Pfam" id="PF12146">
    <property type="entry name" value="Hydrolase_4"/>
    <property type="match status" value="1"/>
</dbReference>
<dbReference type="SUPFAM" id="SSF53474">
    <property type="entry name" value="alpha/beta-Hydrolases"/>
    <property type="match status" value="1"/>
</dbReference>
<gene>
    <name type="ordered locus">MPN_445</name>
    <name type="ORF">MP396</name>
</gene>
<comment type="similarity">
    <text evidence="3">Belongs to the lipase/esterase LIP3/BchO family.</text>
</comment>
<comment type="sequence caution" evidence="3">
    <conflict type="erroneous initiation">
        <sequence resource="EMBL-CDS" id="AAB96044"/>
    </conflict>
</comment>